<dbReference type="EC" id="2.7.7.48" evidence="2"/>
<dbReference type="EC" id="3.6.1.-" evidence="1"/>
<dbReference type="EC" id="2.7.7.88" evidence="1"/>
<dbReference type="EC" id="2.1.1.375" evidence="1"/>
<dbReference type="EMBL" id="L32603">
    <property type="protein sequence ID" value="AAA50385.1"/>
    <property type="molecule type" value="mRNA"/>
</dbReference>
<dbReference type="EMBL" id="M87829">
    <property type="protein sequence ID" value="AAA47896.1"/>
    <property type="molecule type" value="mRNA"/>
</dbReference>
<dbReference type="PIR" id="A40230">
    <property type="entry name" value="ZLVNSY"/>
</dbReference>
<dbReference type="RefSeq" id="NP_042286.1">
    <property type="nucleotide sequence ID" value="NC_001615.3"/>
</dbReference>
<dbReference type="SMR" id="P31332"/>
<dbReference type="GeneID" id="1489882"/>
<dbReference type="KEGG" id="vg:1489882"/>
<dbReference type="Proteomes" id="UP000002326">
    <property type="component" value="Genome"/>
</dbReference>
<dbReference type="GO" id="GO:0030430">
    <property type="term" value="C:host cell cytoplasm"/>
    <property type="evidence" value="ECO:0007669"/>
    <property type="project" value="UniProtKB-SubCell"/>
</dbReference>
<dbReference type="GO" id="GO:0044423">
    <property type="term" value="C:virion component"/>
    <property type="evidence" value="ECO:0007669"/>
    <property type="project" value="UniProtKB-KW"/>
</dbReference>
<dbReference type="GO" id="GO:0005524">
    <property type="term" value="F:ATP binding"/>
    <property type="evidence" value="ECO:0007669"/>
    <property type="project" value="UniProtKB-KW"/>
</dbReference>
<dbReference type="GO" id="GO:0003924">
    <property type="term" value="F:GTPase activity"/>
    <property type="evidence" value="ECO:0007669"/>
    <property type="project" value="RHEA"/>
</dbReference>
<dbReference type="GO" id="GO:0004482">
    <property type="term" value="F:mRNA 5'-cap (guanine-N7-)-methyltransferase activity"/>
    <property type="evidence" value="ECO:0007669"/>
    <property type="project" value="InterPro"/>
</dbReference>
<dbReference type="GO" id="GO:0003968">
    <property type="term" value="F:RNA-directed RNA polymerase activity"/>
    <property type="evidence" value="ECO:0007669"/>
    <property type="project" value="UniProtKB-KW"/>
</dbReference>
<dbReference type="InterPro" id="IPR039736">
    <property type="entry name" value="L_poly_C"/>
</dbReference>
<dbReference type="InterPro" id="IPR026890">
    <property type="entry name" value="Mononeg_mRNAcap"/>
</dbReference>
<dbReference type="InterPro" id="IPR014023">
    <property type="entry name" value="Mononeg_RNA_pol_cat"/>
</dbReference>
<dbReference type="NCBIfam" id="TIGR04198">
    <property type="entry name" value="paramyx_RNAcap"/>
    <property type="match status" value="1"/>
</dbReference>
<dbReference type="Pfam" id="PF14318">
    <property type="entry name" value="Mononeg_mRNAcap"/>
    <property type="match status" value="1"/>
</dbReference>
<dbReference type="Pfam" id="PF00946">
    <property type="entry name" value="Mononeg_RNA_pol"/>
    <property type="match status" value="2"/>
</dbReference>
<dbReference type="PROSITE" id="PS50526">
    <property type="entry name" value="RDRP_SSRNA_NEG_NONSEG"/>
    <property type="match status" value="1"/>
</dbReference>
<keyword id="KW-0067">ATP-binding</keyword>
<keyword id="KW-1035">Host cytoplasm</keyword>
<keyword id="KW-0378">Hydrolase</keyword>
<keyword id="KW-0489">Methyltransferase</keyword>
<keyword id="KW-0506">mRNA capping</keyword>
<keyword id="KW-0507">mRNA processing</keyword>
<keyword id="KW-0511">Multifunctional enzyme</keyword>
<keyword id="KW-0547">Nucleotide-binding</keyword>
<keyword id="KW-0548">Nucleotidyltransferase</keyword>
<keyword id="KW-1185">Reference proteome</keyword>
<keyword id="KW-0696">RNA-directed RNA polymerase</keyword>
<keyword id="KW-0949">S-adenosyl-L-methionine</keyword>
<keyword id="KW-0808">Transferase</keyword>
<keyword id="KW-0693">Viral RNA replication</keyword>
<keyword id="KW-0946">Virion</keyword>
<evidence type="ECO:0000250" key="1">
    <source>
        <dbReference type="UniProtKB" id="P03523"/>
    </source>
</evidence>
<evidence type="ECO:0000250" key="2">
    <source>
        <dbReference type="UniProtKB" id="P28887"/>
    </source>
</evidence>
<evidence type="ECO:0000255" key="3">
    <source>
        <dbReference type="PROSITE-ProRule" id="PRU00539"/>
    </source>
</evidence>
<evidence type="ECO:0000305" key="4"/>
<reference key="1">
    <citation type="journal article" date="1992" name="Virology">
        <title>Structure of the L (polymerase) protein gene of sonchus yellow net virus.</title>
        <authorList>
            <person name="Choi T.-J."/>
            <person name="Kuwata S."/>
            <person name="Koonin E.V."/>
            <person name="Heaton L.A."/>
            <person name="Jackson A.O."/>
        </authorList>
    </citation>
    <scope>NUCLEOTIDE SEQUENCE [MRNA]</scope>
    <source>
        <strain>ATCC PV-263</strain>
    </source>
</reference>
<accession>P31332</accession>
<name>L_SYNV</name>
<proteinExistence type="evidence at transcript level"/>
<feature type="chain" id="PRO_0000222842" description="RNA-directed RNA polymerase L">
    <location>
        <begin position="1"/>
        <end position="2116"/>
    </location>
</feature>
<feature type="domain" description="RdRp catalytic" evidence="3">
    <location>
        <begin position="634"/>
        <end position="818"/>
    </location>
</feature>
<organism>
    <name type="scientific">Sonchus yellow net virus</name>
    <name type="common">SYNV</name>
    <dbReference type="NCBI Taxonomy" id="11307"/>
    <lineage>
        <taxon>Viruses</taxon>
        <taxon>Riboviria</taxon>
        <taxon>Orthornavirae</taxon>
        <taxon>Negarnaviricota</taxon>
        <taxon>Haploviricotina</taxon>
        <taxon>Monjiviricetes</taxon>
        <taxon>Mononegavirales</taxon>
        <taxon>Rhabdoviridae</taxon>
        <taxon>Betarhabdovirinae</taxon>
        <taxon>Betanucleorhabdovirus</taxon>
        <taxon>Betanucleorhabdovirus retesonchi</taxon>
    </lineage>
</organism>
<comment type="function">
    <text evidence="1">RNA-directed RNA polymerase that catalyzes the transcription of viral mRNAs, their capping and polyadenylation. The template is composed of the viral RNA tightly encapsidated by the nucleoprotein (N). The viral polymerase binds to the genomic RNA at the 3' leader promoter, and transcribes subsequently all viral mRNAs with a decreasing efficiency. The first gene is the most transcribed, and the last the least transcribed. The viral phosphoprotein acts as a processivity factor. Capping is concomitant with initiation of mRNA transcription. Indeed, a GDP polyribonucleotidyl transferase (PRNTase) adds the cap structure when the nascent RNA chain length has reached few nucleotides. Ribose 2'-O methylation of viral mRNA cap precedes and facilitates subsequent guanine-N-7 methylation, both activities being carried by the viral polymerase. Polyadenylation of mRNAs occur by a stuttering mechanism at a slipery stop site present at the end viral genes. After finishing transcription of a mRNA, the polymerase can resume transcription of the downstream gene.</text>
</comment>
<comment type="function">
    <text evidence="1">RNA-directed RNA polymerase that catalyzes the replication of viral genomic RNA. The template is composed of the viral RNA tightly encapsidated by the nucleoprotein (N). The replicase mode is dependent on intracellular N protein concentration. In this mode, the polymerase replicates the whole viral genome without recognizing transcriptional signals, and the replicated genome is not caped or polyadenylated.</text>
</comment>
<comment type="catalytic activity">
    <reaction evidence="3">
        <text>RNA(n) + a ribonucleoside 5'-triphosphate = RNA(n+1) + diphosphate</text>
        <dbReference type="Rhea" id="RHEA:21248"/>
        <dbReference type="Rhea" id="RHEA-COMP:14527"/>
        <dbReference type="Rhea" id="RHEA-COMP:17342"/>
        <dbReference type="ChEBI" id="CHEBI:33019"/>
        <dbReference type="ChEBI" id="CHEBI:61557"/>
        <dbReference type="ChEBI" id="CHEBI:140395"/>
        <dbReference type="EC" id="2.7.7.48"/>
    </reaction>
</comment>
<comment type="catalytic activity">
    <reaction evidence="1">
        <text>a 5'-end (5'-triphosphoguanosine)-adenylyl-adenylyl-cytidylyl-adenosine in mRNA + 2 S-adenosyl-L-methionine = a 5'-end (N(7)-methyl 5'-triphosphoguanosine)-(2'-O-methyladenylyl)-adenylyl-cytidylyl-adenosine in mRNA + 2 S-adenosyl-L-homocysteine + H(+)</text>
        <dbReference type="Rhea" id="RHEA:65376"/>
        <dbReference type="Rhea" id="RHEA-COMP:16797"/>
        <dbReference type="Rhea" id="RHEA-COMP:16798"/>
        <dbReference type="ChEBI" id="CHEBI:15378"/>
        <dbReference type="ChEBI" id="CHEBI:57856"/>
        <dbReference type="ChEBI" id="CHEBI:59789"/>
        <dbReference type="ChEBI" id="CHEBI:156483"/>
        <dbReference type="ChEBI" id="CHEBI:156484"/>
        <dbReference type="EC" id="2.1.1.375"/>
    </reaction>
</comment>
<comment type="catalytic activity">
    <reaction evidence="1">
        <text>a 5'-end (5'-triphosphoguanosine)-adenylyl-adenylyl-cytidylyl-adenosine in mRNA + S-adenosyl-L-methionine = a 5'-end (5'-triphosphoguanosine)-(2'-O-methyladenylyl)-adenylyl-cytidylyl-adenosine in mRNA + S-adenosyl-L-homocysteine + H(+)</text>
        <dbReference type="Rhea" id="RHEA:65380"/>
        <dbReference type="Rhea" id="RHEA-COMP:16797"/>
        <dbReference type="Rhea" id="RHEA-COMP:16801"/>
        <dbReference type="ChEBI" id="CHEBI:15378"/>
        <dbReference type="ChEBI" id="CHEBI:57856"/>
        <dbReference type="ChEBI" id="CHEBI:59789"/>
        <dbReference type="ChEBI" id="CHEBI:156482"/>
        <dbReference type="ChEBI" id="CHEBI:156484"/>
    </reaction>
</comment>
<comment type="catalytic activity">
    <reaction evidence="2">
        <text>a 5'-end triphospho-adenylyl-adenylyl-cytidylyl-adenosine in mRNA + GDP + H(+) = a 5'-end (5'-triphosphoguanosine)-adenylyl-adenylyl-cytidylyl-adenosine in mRNA + diphosphate</text>
        <dbReference type="Rhea" id="RHEA:65436"/>
        <dbReference type="Rhea" id="RHEA-COMP:16797"/>
        <dbReference type="Rhea" id="RHEA-COMP:16799"/>
        <dbReference type="ChEBI" id="CHEBI:15378"/>
        <dbReference type="ChEBI" id="CHEBI:33019"/>
        <dbReference type="ChEBI" id="CHEBI:58189"/>
        <dbReference type="ChEBI" id="CHEBI:156484"/>
        <dbReference type="ChEBI" id="CHEBI:156503"/>
        <dbReference type="EC" id="2.7.7.88"/>
    </reaction>
</comment>
<comment type="catalytic activity">
    <reaction evidence="1">
        <text>a 5'-end (5'-triphosphoguanosine)-(2'-O-methyladenylyl)-adenylyl-cytidylyl-adenosine in mRNA + S-adenosyl-L-methionine = a 5'-end (N(7)-methyl 5'-triphosphoguanosine)-(2'-O-methyladenylyl)-adenylyl-cytidylyl-adenosine in mRNA + S-adenosyl-L-homocysteine</text>
        <dbReference type="Rhea" id="RHEA:65440"/>
        <dbReference type="Rhea" id="RHEA-COMP:16798"/>
        <dbReference type="Rhea" id="RHEA-COMP:16801"/>
        <dbReference type="ChEBI" id="CHEBI:57856"/>
        <dbReference type="ChEBI" id="CHEBI:59789"/>
        <dbReference type="ChEBI" id="CHEBI:156482"/>
        <dbReference type="ChEBI" id="CHEBI:156483"/>
    </reaction>
</comment>
<comment type="catalytic activity">
    <reaction evidence="2">
        <text>GTP + H2O = GDP + phosphate + H(+)</text>
        <dbReference type="Rhea" id="RHEA:19669"/>
        <dbReference type="ChEBI" id="CHEBI:15377"/>
        <dbReference type="ChEBI" id="CHEBI:15378"/>
        <dbReference type="ChEBI" id="CHEBI:37565"/>
        <dbReference type="ChEBI" id="CHEBI:43474"/>
        <dbReference type="ChEBI" id="CHEBI:58189"/>
    </reaction>
</comment>
<comment type="subunit">
    <text evidence="1">May form homodimer. Interacts with the P protein.</text>
</comment>
<comment type="subcellular location">
    <subcellularLocation>
        <location evidence="1">Virion</location>
    </subcellularLocation>
    <subcellularLocation>
        <location evidence="1">Host cytoplasm</location>
    </subcellularLocation>
    <text evidence="1">L and P are packaged asymmetrically towards the blunt end of the virus.</text>
</comment>
<comment type="similarity">
    <text evidence="4">Belongs to the rhabdoviridae protein L family.</text>
</comment>
<protein>
    <recommendedName>
        <fullName>RNA-directed RNA polymerase L</fullName>
        <shortName>Protein L</shortName>
    </recommendedName>
    <alternativeName>
        <fullName>Large structural protein</fullName>
    </alternativeName>
    <alternativeName>
        <fullName>Replicase</fullName>
    </alternativeName>
    <alternativeName>
        <fullName>Transcriptase</fullName>
    </alternativeName>
    <domain>
        <recommendedName>
            <fullName>RNA-directed RNA polymerase</fullName>
            <ecNumber evidence="2">2.7.7.48</ecNumber>
        </recommendedName>
    </domain>
    <domain>
        <recommendedName>
            <fullName evidence="1">GTP phosphohydrolase</fullName>
            <ecNumber evidence="1">3.6.1.-</ecNumber>
        </recommendedName>
    </domain>
    <domain>
        <recommendedName>
            <fullName evidence="4">GDP polyribonucleotidyltransferase</fullName>
            <ecNumber evidence="1">2.7.7.88</ecNumber>
        </recommendedName>
        <alternativeName>
            <fullName evidence="4">PRNTase</fullName>
        </alternativeName>
    </domain>
    <domain>
        <recommendedName>
            <fullName evidence="4">mRNA cap methyltransferase</fullName>
            <ecNumber evidence="1">2.1.1.375</ecNumber>
        </recommendedName>
        <alternativeName>
            <fullName evidence="1">mRNA (guanine-N(7)-)-methyltransferase</fullName>
            <shortName evidence="1">G-N7-MTase</shortName>
        </alternativeName>
        <alternativeName>
            <fullName evidence="1">mRNA (nucleoside-2'-O-)-methyltransferase</fullName>
            <shortName evidence="1">N1-2'-O-MTase</shortName>
        </alternativeName>
    </domain>
</protein>
<sequence length="2116" mass="241538">MEGMDHWENAKYFQGIEDIEEDTRQPTVDSMSSGTYHCKSALRSHKDNMKLFLYRRDFLIFSHRFNGLPYDEQYLGVLPKLWSCFYDKTHDLSGFLDQYASREHCTPSDSFSRWADPTVLHLYDDPIIRNLLASENKVLNFLEGGISDILDKYQICIKRNIRLIYLHLFLNLALIVLNHTDADSMPDRRVELNGVTFKLEEGVILCEYNEYLKIYVLKGAVIWDMPAYRQVLQKDLFLTICDKISERINIVIGATIITALSHKTNLDDPDSHLYDACINMIKIGDNILVNHGNRGFDLLGKFEAYCVACILTYDDQRIWNPLEFLNNLIEDDRINQPDLYNDANNLVAFLRKQPIVILAELHGLWRIWGHPIIDLEGGMKKMEATCTKQSPVSVEETRVCERTMKLTFFTNYYDKHHHYPLSTLTHPDHFNLYSQYLSERDKIEYLANKDIAFEHSYIMRCIRRNKKIFQRSSLYNHKDWDQVVILQSFQIPKSVNLATMIKDKAISMTRSELIESVNTKNSVFDSTKRRGILKWLNEQSDKIYNFLMRIDDKGLDEDDCIIGLYPKEREMKTKARFFSLMSYKLRMYVTSTEELLGKYVLKYFPMITMSDNLLSMVIRLFDMTTLIGDKGVAVTYSMNIDFSKWNQNMRERTNAGIFDNLDRILGFRSLISRTHSIFKACYLYLCSGEYVPVISNNQLTAQSPWSRTGDESGKEGLRQKGWTITTVCDILSLAFKYNARIQLIGGGDNQVLTVTMLPSESMQSQGRDSQLLKVRERMTSFRNALAKKMVKRGLPLKLEETWISHNLLMYNKIMYYSGVPLRGRLKVISRLFSNSNVGVTSLGGITSTLGTGFQSISTKDYTPTLAWLISRVFTDIYISTYHLLNPISGTQRLDKQVLMSRGNIRQGRNELGGETSVPIINKIRNHAALATDHTLDLDSLLICVLYYHKILGGPGIGPPTAYVMKGFPDPLSEGLTFNYLVITNVLNERTKRKIISVTKVMKNRNQHWEHLLEDPVSVNHDAPPHGIAALRAQAEAVMRSAKITNIGFKNLIDIGDNQYLRDLSEKLCSPNDLEPRLLHDIVGSTIPGFVNSVLSRVDQSTTINKIAGNSDVVTSIYLSEMSYYLYLSKKVNTQDGHAIGSCPTRDSKMLRNWTWGKNIIGVTTPHPLGYLKRERHSESSSCDNNYIRVLTKRIGNSWELRRGQFRPYFGSYTEEKFKMTTLASAYGDESILKRAIKIQKLLGWRYHQGSSLYNLIQKILTCVTDADPNKFLPLPDEITGDVEHRYHDMATKHGGIPSNLIHLYTHASCNTSTFINHSKGAANESLHFQAAIIWTCMQSICRTSASSSVSDISHYHEACNQCIVKLEDPIESDYSTSDISLMSCPANDLMYVKEDDIPVHFHTTMEFYRASSSSTVLKKIKKIEDAEVISSRMTWVVTLCSHLLNQDTIKHSTWKLISEDLSKEEVMFIVMSITMYIMSEQDIPVHSASLSDFRTLYEKNKDIIDRVLGIEALNDAVSGVSFYNNRCSDDQCLRWKETSDQILSHYKTTGTCAVKYQAPHFRICTRLVYLMTNPSCQSCPCCLGVIKDDSNDGPIMCQLHGELAGPCGYHLCSLDKLNKTKKGLNMSKVFYTDGTISAQHDAKNRPTKKRPHGENSLTEMFKRAKTSRENRILKQNKESYLFIQPRLMVDLFIDMGSMWEKTQISDQGSHIIPAHTNPIVLSKKSDLYVPAAISKFVSNGFLIMDAVERALGKPSKPITEHSQLSVNISYGIEYHPEIKRETVQLLRFVNELAYTGYGGGVTICITLFPIFISDIEAVDPRLISDIIYRYRADSSDYACIRLTDMGDMCFDINNILSDCDACLSYDPGCWSQDANLVYIISDTSDIMIKAKEFETLHSFNKFYSVECLAPRFFMSSSTVSALVISKSSSINSIDYDRLAEIHLDRRGTQMWDLSRLFANMTMRDGLTEMIKCIYNNVSGEATILTSQSLVDAAISKIKVDILRGLIDMVRGERMNWRTQYMIQILLGVMILTSDNPEDYRREISKYNNAVVLLQKPRRIKLIRDHLGGADRKFYHATTNNGLLGSSLNDVTHILEGILYITHRTSRKLCTSISLEV</sequence>
<organismHost>
    <name type="scientific">Aphis</name>
    <dbReference type="NCBI Taxonomy" id="80764"/>
</organismHost>
<organismHost>
    <name type="scientific">Bidens pilosa</name>
    <name type="common">Hairy beggarticks</name>
    <name type="synonym">Cobbler's pegs</name>
    <dbReference type="NCBI Taxonomy" id="42337"/>
</organismHost>
<organismHost>
    <name type="scientific">Lactuca sativa</name>
    <name type="common">Garden lettuce</name>
    <dbReference type="NCBI Taxonomy" id="4236"/>
</organismHost>
<organismHost>
    <name type="scientific">Sonchus oleraceus</name>
    <name type="common">Common sowthistle</name>
    <dbReference type="NCBI Taxonomy" id="50207"/>
</organismHost>
<gene>
    <name type="primary">L</name>
</gene>